<protein>
    <recommendedName>
        <fullName>Adrenodoxin homolog, mitochondrial</fullName>
    </recommendedName>
    <alternativeName>
        <fullName>Mitochondrial ferredoxin</fullName>
    </alternativeName>
</protein>
<dbReference type="EMBL" id="Z73608">
    <property type="protein sequence ID" value="CAA97975.1"/>
    <property type="molecule type" value="Genomic_DNA"/>
</dbReference>
<dbReference type="EMBL" id="Z67751">
    <property type="protein sequence ID" value="CAA91592.1"/>
    <property type="molecule type" value="Genomic_DNA"/>
</dbReference>
<dbReference type="EMBL" id="BK006949">
    <property type="protein sequence ID" value="DAA11185.1"/>
    <property type="molecule type" value="Genomic_DNA"/>
</dbReference>
<dbReference type="PIR" id="S61012">
    <property type="entry name" value="S61012"/>
</dbReference>
<dbReference type="RefSeq" id="NP_015071.1">
    <property type="nucleotide sequence ID" value="NM_001184066.1"/>
</dbReference>
<dbReference type="PDB" id="2MJD">
    <property type="method" value="NMR"/>
    <property type="chains" value="A=58-172"/>
</dbReference>
<dbReference type="PDB" id="2MJE">
    <property type="method" value="NMR"/>
    <property type="chains" value="A=58-172"/>
</dbReference>
<dbReference type="PDBsum" id="2MJD"/>
<dbReference type="PDBsum" id="2MJE"/>
<dbReference type="BMRB" id="Q12184"/>
<dbReference type="SMR" id="Q12184"/>
<dbReference type="BioGRID" id="35911">
    <property type="interactions" value="12"/>
</dbReference>
<dbReference type="ComplexPortal" id="CPX-392">
    <property type="entry name" value="Mitochondrial NIAUFX iron-sulfur cluster assembly complex"/>
</dbReference>
<dbReference type="DIP" id="DIP-5027N"/>
<dbReference type="FunCoup" id="Q12184">
    <property type="interactions" value="531"/>
</dbReference>
<dbReference type="IntAct" id="Q12184">
    <property type="interactions" value="2"/>
</dbReference>
<dbReference type="STRING" id="4932.YPL252C"/>
<dbReference type="PaxDb" id="4932-YPL252C"/>
<dbReference type="PeptideAtlas" id="Q12184"/>
<dbReference type="EnsemblFungi" id="YPL252C_mRNA">
    <property type="protein sequence ID" value="YPL252C"/>
    <property type="gene ID" value="YPL252C"/>
</dbReference>
<dbReference type="GeneID" id="855824"/>
<dbReference type="KEGG" id="sce:YPL252C"/>
<dbReference type="AGR" id="SGD:S000006173"/>
<dbReference type="SGD" id="S000006173">
    <property type="gene designation" value="YAH1"/>
</dbReference>
<dbReference type="VEuPathDB" id="FungiDB:YPL252C"/>
<dbReference type="eggNOG" id="KOG3309">
    <property type="taxonomic scope" value="Eukaryota"/>
</dbReference>
<dbReference type="GeneTree" id="ENSGT00940000161143"/>
<dbReference type="HOGENOM" id="CLU_082632_0_2_1"/>
<dbReference type="InParanoid" id="Q12184"/>
<dbReference type="OMA" id="TLGWGWR"/>
<dbReference type="OrthoDB" id="268593at2759"/>
<dbReference type="BioCyc" id="MetaCyc:G3O-34137-MONOMER"/>
<dbReference type="BioCyc" id="YEAST:G3O-34137-MONOMER"/>
<dbReference type="Reactome" id="R-SCE-1362409">
    <property type="pathway name" value="Mitochondrial iron-sulfur cluster biogenesis"/>
</dbReference>
<dbReference type="Reactome" id="R-SCE-2395516">
    <property type="pathway name" value="Electron transport from NADPH to Ferredoxin"/>
</dbReference>
<dbReference type="BioGRID-ORCS" id="855824">
    <property type="hits" value="7 hits in 10 CRISPR screens"/>
</dbReference>
<dbReference type="EvolutionaryTrace" id="Q12184"/>
<dbReference type="PRO" id="PR:Q12184"/>
<dbReference type="Proteomes" id="UP000002311">
    <property type="component" value="Chromosome XVI"/>
</dbReference>
<dbReference type="RNAct" id="Q12184">
    <property type="molecule type" value="protein"/>
</dbReference>
<dbReference type="GO" id="GO:1990229">
    <property type="term" value="C:iron-sulfur cluster assembly complex"/>
    <property type="evidence" value="ECO:0000303"/>
    <property type="project" value="ComplexPortal"/>
</dbReference>
<dbReference type="GO" id="GO:0005759">
    <property type="term" value="C:mitochondrial matrix"/>
    <property type="evidence" value="ECO:0000314"/>
    <property type="project" value="UniProtKB"/>
</dbReference>
<dbReference type="GO" id="GO:0005739">
    <property type="term" value="C:mitochondrion"/>
    <property type="evidence" value="ECO:0000318"/>
    <property type="project" value="GO_Central"/>
</dbReference>
<dbReference type="GO" id="GO:0051537">
    <property type="term" value="F:2 iron, 2 sulfur cluster binding"/>
    <property type="evidence" value="ECO:0007669"/>
    <property type="project" value="UniProtKB-KW"/>
</dbReference>
<dbReference type="GO" id="GO:0009055">
    <property type="term" value="F:electron transfer activity"/>
    <property type="evidence" value="ECO:0000318"/>
    <property type="project" value="GO_Central"/>
</dbReference>
<dbReference type="GO" id="GO:0051536">
    <property type="term" value="F:iron-sulfur cluster binding"/>
    <property type="evidence" value="ECO:0000314"/>
    <property type="project" value="UniProtKB"/>
</dbReference>
<dbReference type="GO" id="GO:0046872">
    <property type="term" value="F:metal ion binding"/>
    <property type="evidence" value="ECO:0007669"/>
    <property type="project" value="UniProtKB-KW"/>
</dbReference>
<dbReference type="GO" id="GO:0016653">
    <property type="term" value="F:oxidoreductase activity, acting on NAD(P)H, heme protein as acceptor"/>
    <property type="evidence" value="ECO:0000315"/>
    <property type="project" value="SGD"/>
</dbReference>
<dbReference type="GO" id="GO:0022900">
    <property type="term" value="P:electron transport chain"/>
    <property type="evidence" value="ECO:0000318"/>
    <property type="project" value="GO_Central"/>
</dbReference>
<dbReference type="GO" id="GO:0006784">
    <property type="term" value="P:heme A biosynthetic process"/>
    <property type="evidence" value="ECO:0000315"/>
    <property type="project" value="SGD"/>
</dbReference>
<dbReference type="GO" id="GO:0016226">
    <property type="term" value="P:iron-sulfur cluster assembly"/>
    <property type="evidence" value="ECO:0000314"/>
    <property type="project" value="UniProtKB"/>
</dbReference>
<dbReference type="GO" id="GO:0140647">
    <property type="term" value="P:P450-containing electron transport chain"/>
    <property type="evidence" value="ECO:0007669"/>
    <property type="project" value="InterPro"/>
</dbReference>
<dbReference type="GO" id="GO:0006744">
    <property type="term" value="P:ubiquinone biosynthetic process"/>
    <property type="evidence" value="ECO:0000315"/>
    <property type="project" value="SGD"/>
</dbReference>
<dbReference type="CDD" id="cd00207">
    <property type="entry name" value="fer2"/>
    <property type="match status" value="1"/>
</dbReference>
<dbReference type="FunFam" id="3.10.20.30:FF:000013">
    <property type="entry name" value="Adrenodoxin, mitochondrial"/>
    <property type="match status" value="1"/>
</dbReference>
<dbReference type="Gene3D" id="3.10.20.30">
    <property type="match status" value="1"/>
</dbReference>
<dbReference type="InterPro" id="IPR036010">
    <property type="entry name" value="2Fe-2S_ferredoxin-like_sf"/>
</dbReference>
<dbReference type="InterPro" id="IPR001041">
    <property type="entry name" value="2Fe-2S_ferredoxin-type"/>
</dbReference>
<dbReference type="InterPro" id="IPR001055">
    <property type="entry name" value="Adrenodoxin-like"/>
</dbReference>
<dbReference type="InterPro" id="IPR018298">
    <property type="entry name" value="Adrenodoxin_Fe-S_BS"/>
</dbReference>
<dbReference type="InterPro" id="IPR012675">
    <property type="entry name" value="Beta-grasp_dom_sf"/>
</dbReference>
<dbReference type="PANTHER" id="PTHR23426:SF65">
    <property type="entry name" value="FERREDOXIN-2, MITOCHONDRIAL"/>
    <property type="match status" value="1"/>
</dbReference>
<dbReference type="PANTHER" id="PTHR23426">
    <property type="entry name" value="FERREDOXIN/ADRENODOXIN"/>
    <property type="match status" value="1"/>
</dbReference>
<dbReference type="Pfam" id="PF00111">
    <property type="entry name" value="Fer2"/>
    <property type="match status" value="1"/>
</dbReference>
<dbReference type="PRINTS" id="PR00355">
    <property type="entry name" value="ADRENODOXIN"/>
</dbReference>
<dbReference type="SUPFAM" id="SSF54292">
    <property type="entry name" value="2Fe-2S ferredoxin-like"/>
    <property type="match status" value="1"/>
</dbReference>
<dbReference type="PROSITE" id="PS51085">
    <property type="entry name" value="2FE2S_FER_2"/>
    <property type="match status" value="1"/>
</dbReference>
<dbReference type="PROSITE" id="PS00814">
    <property type="entry name" value="ADX"/>
    <property type="match status" value="1"/>
</dbReference>
<feature type="transit peptide" description="Mitochondrion" evidence="1">
    <location>
        <begin position="1"/>
        <end position="16"/>
    </location>
</feature>
<feature type="chain" id="PRO_0000000994" description="Adrenodoxin homolog, mitochondrial" evidence="1">
    <location>
        <begin position="17"/>
        <end position="172"/>
    </location>
</feature>
<feature type="domain" description="2Fe-2S ferredoxin-type" evidence="2">
    <location>
        <begin position="61"/>
        <end position="163"/>
    </location>
</feature>
<feature type="binding site" evidence="12">
    <location>
        <position position="98"/>
    </location>
    <ligand>
        <name>[2Fe-2S] cluster</name>
        <dbReference type="ChEBI" id="CHEBI:190135"/>
    </ligand>
</feature>
<feature type="binding site" evidence="12">
    <location>
        <position position="104"/>
    </location>
    <ligand>
        <name>[2Fe-2S] cluster</name>
        <dbReference type="ChEBI" id="CHEBI:190135"/>
    </ligand>
</feature>
<feature type="binding site" evidence="12">
    <location>
        <position position="107"/>
    </location>
    <ligand>
        <name>[2Fe-2S] cluster</name>
        <dbReference type="ChEBI" id="CHEBI:190135"/>
    </ligand>
</feature>
<feature type="binding site" evidence="12">
    <location>
        <position position="144"/>
    </location>
    <ligand>
        <name>[2Fe-2S] cluster</name>
        <dbReference type="ChEBI" id="CHEBI:190135"/>
    </ligand>
</feature>
<feature type="strand" evidence="19">
    <location>
        <begin position="61"/>
        <end position="66"/>
    </location>
</feature>
<feature type="strand" evidence="19">
    <location>
        <begin position="72"/>
        <end position="77"/>
    </location>
</feature>
<feature type="helix" evidence="19">
    <location>
        <begin position="83"/>
        <end position="90"/>
    </location>
</feature>
<feature type="strand" evidence="19">
    <location>
        <begin position="101"/>
        <end position="104"/>
    </location>
</feature>
<feature type="strand" evidence="19">
    <location>
        <begin position="108"/>
        <end position="111"/>
    </location>
</feature>
<feature type="turn" evidence="19">
    <location>
        <begin position="113"/>
        <end position="115"/>
    </location>
</feature>
<feature type="turn" evidence="19">
    <location>
        <begin position="124"/>
        <end position="127"/>
    </location>
</feature>
<feature type="helix" evidence="19">
    <location>
        <begin position="128"/>
        <end position="131"/>
    </location>
</feature>
<feature type="strand" evidence="19">
    <location>
        <begin position="133"/>
        <end position="135"/>
    </location>
</feature>
<feature type="strand" evidence="19">
    <location>
        <begin position="140"/>
        <end position="142"/>
    </location>
</feature>
<feature type="turn" evidence="19">
    <location>
        <begin position="143"/>
        <end position="145"/>
    </location>
</feature>
<feature type="helix" evidence="20">
    <location>
        <begin position="150"/>
        <end position="152"/>
    </location>
</feature>
<feature type="strand" evidence="19">
    <location>
        <begin position="156"/>
        <end position="158"/>
    </location>
</feature>
<sequence>MLKIVTRAGHTARISNIAAHLLRTSPSLLTRTTTTTRFLPFSTSSFLNHGHLKKPKPGEELKITFILKDGSQKTYEVCEGETILDIAQGHNLDMEGACGGSCACSTCHVIVDPDYYDALPEPEDDENDMLDLAYGLTETSRLGCQIKMSKDIDGIRVALPQMTRNVNNNDFS</sequence>
<name>ADRX_YEAST</name>
<evidence type="ECO:0000255" key="1"/>
<evidence type="ECO:0000255" key="2">
    <source>
        <dbReference type="PROSITE-ProRule" id="PRU00465"/>
    </source>
</evidence>
<evidence type="ECO:0000269" key="3">
    <source>
    </source>
</evidence>
<evidence type="ECO:0000269" key="4">
    <source>
    </source>
</evidence>
<evidence type="ECO:0000269" key="5">
    <source>
    </source>
</evidence>
<evidence type="ECO:0000269" key="6">
    <source>
    </source>
</evidence>
<evidence type="ECO:0000269" key="7">
    <source>
    </source>
</evidence>
<evidence type="ECO:0000269" key="8">
    <source>
    </source>
</evidence>
<evidence type="ECO:0000269" key="9">
    <source>
    </source>
</evidence>
<evidence type="ECO:0000269" key="10">
    <source>
    </source>
</evidence>
<evidence type="ECO:0000269" key="11">
    <source>
    </source>
</evidence>
<evidence type="ECO:0000269" key="12">
    <source>
    </source>
</evidence>
<evidence type="ECO:0000269" key="13">
    <source>
    </source>
</evidence>
<evidence type="ECO:0000305" key="14"/>
<evidence type="ECO:0000312" key="15">
    <source>
        <dbReference type="Proteomes" id="UP000002311"/>
    </source>
</evidence>
<evidence type="ECO:0000312" key="16">
    <source>
        <dbReference type="SGD" id="S000006173"/>
    </source>
</evidence>
<evidence type="ECO:0007744" key="17">
    <source>
        <dbReference type="PDB" id="2MJD"/>
    </source>
</evidence>
<evidence type="ECO:0007744" key="18">
    <source>
        <dbReference type="PDB" id="2MJE"/>
    </source>
</evidence>
<evidence type="ECO:0007829" key="19">
    <source>
        <dbReference type="PDB" id="2MJD"/>
    </source>
</evidence>
<evidence type="ECO:0007829" key="20">
    <source>
        <dbReference type="PDB" id="2MJE"/>
    </source>
</evidence>
<keyword id="KW-0001">2Fe-2S</keyword>
<keyword id="KW-0002">3D-structure</keyword>
<keyword id="KW-0249">Electron transport</keyword>
<keyword id="KW-0408">Iron</keyword>
<keyword id="KW-0411">Iron-sulfur</keyword>
<keyword id="KW-0479">Metal-binding</keyword>
<keyword id="KW-0496">Mitochondrion</keyword>
<keyword id="KW-1185">Reference proteome</keyword>
<keyword id="KW-0809">Transit peptide</keyword>
<keyword id="KW-0813">Transport</keyword>
<comment type="function">
    <text evidence="4 5 6 7 9 10 11 12">Iron-sulfur protein that transfers electrons in a wide variety of metabolic reactions. Involved in heme A biosynthesis and in iron-sulfur cluster assembly (PubMed:10655482). Transfers electrons from adrenodoxin reductase ARH1 to heme A synthase COX15, a heme protein that catalyzes the conversion of heme O to heme A (PubMed:11248251, PubMed:11788607). Required for the de novo synthesis of Fe-S clusters on iron sulfur cluster assembly protein ISU1. Interact in its reduced state with ISU1 to productively deliver electrons for Fe-S cluster synthesis (PubMed:12970193, PubMed:15211518, PubMed:25358379). Essential for coenzyme Q biosynthesis. May transfer the electrons required for the hydroxylation reaction performed by COQ6 (PubMed:20534343, PubMed:21944752).</text>
</comment>
<comment type="cofactor">
    <cofactor evidence="12 13">
        <name>[2Fe-2S] cluster</name>
        <dbReference type="ChEBI" id="CHEBI:190135"/>
    </cofactor>
    <text evidence="12">Binds 1 [2Fe-2S] cluster.</text>
</comment>
<comment type="subunit">
    <text evidence="12">Interacts in its reduced state with the apo form of ISU1.</text>
</comment>
<comment type="subcellular location">
    <subcellularLocation>
        <location evidence="3 4">Mitochondrion matrix</location>
    </subcellularLocation>
</comment>
<comment type="miscellaneous">
    <text evidence="8">Present with 14800 molecules/cell in log phase SD medium.</text>
</comment>
<comment type="similarity">
    <text evidence="14">Belongs to the adrenodoxin/putidaredoxin family.</text>
</comment>
<reference key="1">
    <citation type="journal article" date="1997" name="Nature">
        <title>The nucleotide sequence of Saccharomyces cerevisiae chromosome XVI.</title>
        <authorList>
            <person name="Bussey H."/>
            <person name="Storms R.K."/>
            <person name="Ahmed A."/>
            <person name="Albermann K."/>
            <person name="Allen E."/>
            <person name="Ansorge W."/>
            <person name="Araujo R."/>
            <person name="Aparicio A."/>
            <person name="Barrell B.G."/>
            <person name="Badcock K."/>
            <person name="Benes V."/>
            <person name="Botstein D."/>
            <person name="Bowman S."/>
            <person name="Brueckner M."/>
            <person name="Carpenter J."/>
            <person name="Cherry J.M."/>
            <person name="Chung E."/>
            <person name="Churcher C.M."/>
            <person name="Coster F."/>
            <person name="Davis K."/>
            <person name="Davis R.W."/>
            <person name="Dietrich F.S."/>
            <person name="Delius H."/>
            <person name="DiPaolo T."/>
            <person name="Dubois E."/>
            <person name="Duesterhoeft A."/>
            <person name="Duncan M."/>
            <person name="Floeth M."/>
            <person name="Fortin N."/>
            <person name="Friesen J.D."/>
            <person name="Fritz C."/>
            <person name="Goffeau A."/>
            <person name="Hall J."/>
            <person name="Hebling U."/>
            <person name="Heumann K."/>
            <person name="Hilbert H."/>
            <person name="Hillier L.W."/>
            <person name="Hunicke-Smith S."/>
            <person name="Hyman R.W."/>
            <person name="Johnston M."/>
            <person name="Kalman S."/>
            <person name="Kleine K."/>
            <person name="Komp C."/>
            <person name="Kurdi O."/>
            <person name="Lashkari D."/>
            <person name="Lew H."/>
            <person name="Lin A."/>
            <person name="Lin D."/>
            <person name="Louis E.J."/>
            <person name="Marathe R."/>
            <person name="Messenguy F."/>
            <person name="Mewes H.-W."/>
            <person name="Mirtipati S."/>
            <person name="Moestl D."/>
            <person name="Mueller-Auer S."/>
            <person name="Namath A."/>
            <person name="Nentwich U."/>
            <person name="Oefner P."/>
            <person name="Pearson D."/>
            <person name="Petel F.X."/>
            <person name="Pohl T.M."/>
            <person name="Purnelle B."/>
            <person name="Rajandream M.A."/>
            <person name="Rechmann S."/>
            <person name="Rieger M."/>
            <person name="Riles L."/>
            <person name="Roberts D."/>
            <person name="Schaefer M."/>
            <person name="Scharfe M."/>
            <person name="Scherens B."/>
            <person name="Schramm S."/>
            <person name="Schroeder M."/>
            <person name="Sdicu A.-M."/>
            <person name="Tettelin H."/>
            <person name="Urrestarazu L.A."/>
            <person name="Ushinsky S."/>
            <person name="Vierendeels F."/>
            <person name="Vissers S."/>
            <person name="Voss H."/>
            <person name="Walsh S.V."/>
            <person name="Wambutt R."/>
            <person name="Wang Y."/>
            <person name="Wedler E."/>
            <person name="Wedler H."/>
            <person name="Winnett E."/>
            <person name="Zhong W.-W."/>
            <person name="Zollner A."/>
            <person name="Vo D.H."/>
            <person name="Hani J."/>
        </authorList>
    </citation>
    <scope>NUCLEOTIDE SEQUENCE [LARGE SCALE GENOMIC DNA]</scope>
    <source>
        <strain>ATCC 204508 / S288c</strain>
    </source>
</reference>
<reference key="2">
    <citation type="journal article" date="2014" name="G3 (Bethesda)">
        <title>The reference genome sequence of Saccharomyces cerevisiae: Then and now.</title>
        <authorList>
            <person name="Engel S.R."/>
            <person name="Dietrich F.S."/>
            <person name="Fisk D.G."/>
            <person name="Binkley G."/>
            <person name="Balakrishnan R."/>
            <person name="Costanzo M.C."/>
            <person name="Dwight S.S."/>
            <person name="Hitz B.C."/>
            <person name="Karra K."/>
            <person name="Nash R.S."/>
            <person name="Weng S."/>
            <person name="Wong E.D."/>
            <person name="Lloyd P."/>
            <person name="Skrzypek M.S."/>
            <person name="Miyasato S.R."/>
            <person name="Simison M."/>
            <person name="Cherry J.M."/>
        </authorList>
    </citation>
    <scope>GENOME REANNOTATION</scope>
    <source>
        <strain>ATCC 204508 / S288c</strain>
    </source>
</reference>
<reference key="3">
    <citation type="journal article" date="1999" name="Gene">
        <title>YAH1 of Saccharomyces cerevisiae: a new essential gene that codes for a protein homologous to human adrenodoxin.</title>
        <authorList>
            <person name="Barros M.H."/>
            <person name="Nobrega F.G."/>
        </authorList>
    </citation>
    <scope>IDENTIFICATION</scope>
    <scope>SUBCELLULAR LOCATION</scope>
</reference>
<reference key="4">
    <citation type="journal article" date="2000" name="Proc. Natl. Acad. Sci. U.S.A.">
        <title>A mitochondrial ferredoxin is essential for biogenesis of cellular iron-sulfur proteins.</title>
        <authorList>
            <person name="Lange H."/>
            <person name="Kaut A."/>
            <person name="Kispal G."/>
            <person name="Lill R."/>
        </authorList>
    </citation>
    <scope>FUNCTION</scope>
    <scope>SUBCELLULAR LOCATION</scope>
</reference>
<reference key="5">
    <citation type="journal article" date="2001" name="FEBS Lett.">
        <title>Involvement of mitochondrial ferredoxin and Cox15p in hydroxylation of heme O.</title>
        <authorList>
            <person name="Barros M.H."/>
            <person name="Carlson C.G."/>
            <person name="Glerum D.M."/>
            <person name="Tzagoloff A."/>
        </authorList>
    </citation>
    <scope>FUNCTION</scope>
</reference>
<reference key="6">
    <citation type="journal article" date="2002" name="J. Biol. Chem.">
        <title>Mitochondrial ferredoxin is required for heme A synthesis in Saccharomyces cerevisiae.</title>
        <authorList>
            <person name="Barros M.H."/>
            <person name="Nobrega F.G."/>
            <person name="Tzagoloff A."/>
        </authorList>
    </citation>
    <scope>FUNCTION</scope>
</reference>
<reference key="7">
    <citation type="journal article" date="2003" name="EMBO J.">
        <title>Components involved in assembly and dislocation of iron-sulfur clusters on the scaffold protein Isu1p.</title>
        <authorList>
            <person name="Muehlenhoff U."/>
            <person name="Gerber J."/>
            <person name="Richhardt N."/>
            <person name="Lill R."/>
        </authorList>
    </citation>
    <scope>FUNCTION</scope>
</reference>
<reference key="8">
    <citation type="journal article" date="2003" name="Nature">
        <title>Global analysis of protein expression in yeast.</title>
        <authorList>
            <person name="Ghaemmaghami S."/>
            <person name="Huh W.-K."/>
            <person name="Bower K."/>
            <person name="Howson R.W."/>
            <person name="Belle A."/>
            <person name="Dephoure N."/>
            <person name="O'Shea E.K."/>
            <person name="Weissman J.S."/>
        </authorList>
    </citation>
    <scope>LEVEL OF PROTEIN EXPRESSION [LARGE SCALE ANALYSIS]</scope>
</reference>
<reference key="9">
    <citation type="journal article" date="2004" name="Proteins">
        <title>Predictive reconstruction of the mitochondrial iron-sulfur cluster assembly metabolism: I. The role of the protein pair ferredoxin-ferredoxin reductase (Yah1-Arh1).</title>
        <authorList>
            <person name="Alves R."/>
            <person name="Herrero E."/>
            <person name="Sorribas A."/>
        </authorList>
    </citation>
    <scope>FUNCTION</scope>
</reference>
<reference key="10">
    <citation type="journal article" date="2010" name="Chem. Biol.">
        <title>Involvement of mitochondrial ferredoxin and para-aminobenzoic acid in yeast coenzyme Q biosynthesis.</title>
        <authorList>
            <person name="Pierrel F."/>
            <person name="Hamelin O."/>
            <person name="Douki T."/>
            <person name="Kieffer-Jaquinod S."/>
            <person name="Muehlenhoff U."/>
            <person name="Ozeir M."/>
            <person name="Lill R."/>
            <person name="Fontecave M."/>
        </authorList>
    </citation>
    <scope>FUNCTION</scope>
</reference>
<reference key="11">
    <citation type="journal article" date="2011" name="Chem. Biol.">
        <title>Coenzyme Q biosynthesis: Coq6 is required for the C5-hydroxylation reaction and substrate analogs rescue Coq6 deficiency.</title>
        <authorList>
            <person name="Ozeir M."/>
            <person name="Muhlenhoff U."/>
            <person name="Webert H."/>
            <person name="Lill R."/>
            <person name="Fontecave M."/>
            <person name="Pierrel F."/>
        </authorList>
    </citation>
    <scope>FUNCTION</scope>
</reference>
<reference key="12">
    <citation type="journal article" date="2017" name="Metallomics">
        <title>In vitro characterization of a novel Isu homologue from Drosophila melanogaster for de novo FeS-cluster formation.</title>
        <authorList>
            <person name="Dzul S.P."/>
            <person name="Rocha A.G."/>
            <person name="Rawat S."/>
            <person name="Kandegedara A."/>
            <person name="Kusowski A."/>
            <person name="Pain J."/>
            <person name="Murari A."/>
            <person name="Pain D."/>
            <person name="Dancis A."/>
            <person name="Stemmler T.L."/>
        </authorList>
    </citation>
    <scope>COFACTOR</scope>
</reference>
<reference evidence="17 18" key="13">
    <citation type="journal article" date="2014" name="Nat. Commun.">
        <title>Functional reconstitution of mitochondrial Fe/S cluster synthesis on Isu1 reveals the involvement of ferredoxin.</title>
        <authorList>
            <person name="Webert H."/>
            <person name="Freibert S.A."/>
            <person name="Gallo A."/>
            <person name="Heidenreich T."/>
            <person name="Linne U."/>
            <person name="Amlacher S."/>
            <person name="Hurt E."/>
            <person name="Muehlenhoff U."/>
            <person name="Banci L."/>
            <person name="Lill R."/>
        </authorList>
    </citation>
    <scope>STRUCTURE BY NMR OF 58-172 IN COMPLEX WITH IRON-SULFUR (2FE-2S)</scope>
    <scope>FUNCTION</scope>
    <scope>INTERACTION WITH ISU1</scope>
</reference>
<organism evidence="15">
    <name type="scientific">Saccharomyces cerevisiae (strain ATCC 204508 / S288c)</name>
    <name type="common">Baker's yeast</name>
    <dbReference type="NCBI Taxonomy" id="559292"/>
    <lineage>
        <taxon>Eukaryota</taxon>
        <taxon>Fungi</taxon>
        <taxon>Dikarya</taxon>
        <taxon>Ascomycota</taxon>
        <taxon>Saccharomycotina</taxon>
        <taxon>Saccharomycetes</taxon>
        <taxon>Saccharomycetales</taxon>
        <taxon>Saccharomycetaceae</taxon>
        <taxon>Saccharomyces</taxon>
    </lineage>
</organism>
<gene>
    <name evidence="16" type="primary">YAH1</name>
    <name evidence="16" type="ordered locus">YPL252C</name>
</gene>
<accession>Q12184</accession>
<accession>D6W3B9</accession>
<proteinExistence type="evidence at protein level"/>